<feature type="chain" id="PRO_1000189633" description="ATP-dependent Clp protease proteolytic subunit">
    <location>
        <begin position="1"/>
        <end position="217"/>
    </location>
</feature>
<feature type="active site" description="Nucleophile" evidence="1">
    <location>
        <position position="119"/>
    </location>
</feature>
<feature type="active site" evidence="1">
    <location>
        <position position="144"/>
    </location>
</feature>
<sequence>MQRFTDFYASMHGGASVTPTGLGYIPMVIEQSGRGERAYDIYSRLLRERLIFLVGPVNDNTANLIVAQLLFLESENPDKDISLYINSPGGSVYAGMAIYDTMQFVKPDVSTLCTGLAASMGAFLLAAGKKGKRFTLPNSRIMIHQPSGGAQGQASDIQIQAREILDLRERLNRILAENTGQPVERIAVDTERDNFMSAEDAVSYGLVDKVLASRSEG</sequence>
<keyword id="KW-0963">Cytoplasm</keyword>
<keyword id="KW-0378">Hydrolase</keyword>
<keyword id="KW-0645">Protease</keyword>
<keyword id="KW-0720">Serine protease</keyword>
<gene>
    <name evidence="1" type="primary">clpP</name>
    <name type="ordered locus">Bpet2791</name>
</gene>
<proteinExistence type="inferred from homology"/>
<comment type="function">
    <text evidence="1">Cleaves peptides in various proteins in a process that requires ATP hydrolysis. Has a chymotrypsin-like activity. Plays a major role in the degradation of misfolded proteins.</text>
</comment>
<comment type="catalytic activity">
    <reaction evidence="1">
        <text>Hydrolysis of proteins to small peptides in the presence of ATP and magnesium. alpha-casein is the usual test substrate. In the absence of ATP, only oligopeptides shorter than five residues are hydrolyzed (such as succinyl-Leu-Tyr-|-NHMec, and Leu-Tyr-Leu-|-Tyr-Trp, in which cleavage of the -Tyr-|-Leu- and -Tyr-|-Trp bonds also occurs).</text>
        <dbReference type="EC" id="3.4.21.92"/>
    </reaction>
</comment>
<comment type="subunit">
    <text evidence="1">Fourteen ClpP subunits assemble into 2 heptameric rings which stack back to back to give a disk-like structure with a central cavity, resembling the structure of eukaryotic proteasomes.</text>
</comment>
<comment type="subcellular location">
    <subcellularLocation>
        <location evidence="1">Cytoplasm</location>
    </subcellularLocation>
</comment>
<comment type="similarity">
    <text evidence="1">Belongs to the peptidase S14 family.</text>
</comment>
<reference key="1">
    <citation type="journal article" date="2008" name="BMC Genomics">
        <title>The missing link: Bordetella petrii is endowed with both the metabolic versatility of environmental bacteria and virulence traits of pathogenic Bordetellae.</title>
        <authorList>
            <person name="Gross R."/>
            <person name="Guzman C.A."/>
            <person name="Sebaihia M."/>
            <person name="Martin dos Santos V.A.P."/>
            <person name="Pieper D.H."/>
            <person name="Koebnik R."/>
            <person name="Lechner M."/>
            <person name="Bartels D."/>
            <person name="Buhrmester J."/>
            <person name="Choudhuri J.V."/>
            <person name="Ebensen T."/>
            <person name="Gaigalat L."/>
            <person name="Herrmann S."/>
            <person name="Khachane A.N."/>
            <person name="Larisch C."/>
            <person name="Link S."/>
            <person name="Linke B."/>
            <person name="Meyer F."/>
            <person name="Mormann S."/>
            <person name="Nakunst D."/>
            <person name="Rueckert C."/>
            <person name="Schneiker-Bekel S."/>
            <person name="Schulze K."/>
            <person name="Voerholter F.-J."/>
            <person name="Yevsa T."/>
            <person name="Engle J.T."/>
            <person name="Goldman W.E."/>
            <person name="Puehler A."/>
            <person name="Goebel U.B."/>
            <person name="Goesmann A."/>
            <person name="Bloecker H."/>
            <person name="Kaiser O."/>
            <person name="Martinez-Arias R."/>
        </authorList>
    </citation>
    <scope>NUCLEOTIDE SEQUENCE [LARGE SCALE GENOMIC DNA]</scope>
    <source>
        <strain>ATCC BAA-461 / DSM 12804 / CCUG 43448</strain>
    </source>
</reference>
<evidence type="ECO:0000255" key="1">
    <source>
        <dbReference type="HAMAP-Rule" id="MF_00444"/>
    </source>
</evidence>
<dbReference type="EC" id="3.4.21.92" evidence="1"/>
<dbReference type="EMBL" id="AM902716">
    <property type="protein sequence ID" value="CAP43133.1"/>
    <property type="molecule type" value="Genomic_DNA"/>
</dbReference>
<dbReference type="SMR" id="A9IR54"/>
<dbReference type="STRING" id="94624.Bpet2791"/>
<dbReference type="MEROPS" id="S14.001"/>
<dbReference type="KEGG" id="bpt:Bpet2791"/>
<dbReference type="eggNOG" id="COG0740">
    <property type="taxonomic scope" value="Bacteria"/>
</dbReference>
<dbReference type="Proteomes" id="UP000001225">
    <property type="component" value="Chromosome"/>
</dbReference>
<dbReference type="GO" id="GO:0005737">
    <property type="term" value="C:cytoplasm"/>
    <property type="evidence" value="ECO:0007669"/>
    <property type="project" value="UniProtKB-SubCell"/>
</dbReference>
<dbReference type="GO" id="GO:0009368">
    <property type="term" value="C:endopeptidase Clp complex"/>
    <property type="evidence" value="ECO:0007669"/>
    <property type="project" value="TreeGrafter"/>
</dbReference>
<dbReference type="GO" id="GO:0004176">
    <property type="term" value="F:ATP-dependent peptidase activity"/>
    <property type="evidence" value="ECO:0007669"/>
    <property type="project" value="InterPro"/>
</dbReference>
<dbReference type="GO" id="GO:0051117">
    <property type="term" value="F:ATPase binding"/>
    <property type="evidence" value="ECO:0007669"/>
    <property type="project" value="TreeGrafter"/>
</dbReference>
<dbReference type="GO" id="GO:0004252">
    <property type="term" value="F:serine-type endopeptidase activity"/>
    <property type="evidence" value="ECO:0007669"/>
    <property type="project" value="UniProtKB-UniRule"/>
</dbReference>
<dbReference type="GO" id="GO:0006515">
    <property type="term" value="P:protein quality control for misfolded or incompletely synthesized proteins"/>
    <property type="evidence" value="ECO:0007669"/>
    <property type="project" value="TreeGrafter"/>
</dbReference>
<dbReference type="CDD" id="cd07017">
    <property type="entry name" value="S14_ClpP_2"/>
    <property type="match status" value="1"/>
</dbReference>
<dbReference type="FunFam" id="3.90.226.10:FF:000001">
    <property type="entry name" value="ATP-dependent Clp protease proteolytic subunit"/>
    <property type="match status" value="1"/>
</dbReference>
<dbReference type="Gene3D" id="3.90.226.10">
    <property type="entry name" value="2-enoyl-CoA Hydratase, Chain A, domain 1"/>
    <property type="match status" value="1"/>
</dbReference>
<dbReference type="HAMAP" id="MF_00444">
    <property type="entry name" value="ClpP"/>
    <property type="match status" value="1"/>
</dbReference>
<dbReference type="InterPro" id="IPR001907">
    <property type="entry name" value="ClpP"/>
</dbReference>
<dbReference type="InterPro" id="IPR029045">
    <property type="entry name" value="ClpP/crotonase-like_dom_sf"/>
</dbReference>
<dbReference type="InterPro" id="IPR023562">
    <property type="entry name" value="ClpP/TepA"/>
</dbReference>
<dbReference type="InterPro" id="IPR033135">
    <property type="entry name" value="ClpP_His_AS"/>
</dbReference>
<dbReference type="NCBIfam" id="TIGR00493">
    <property type="entry name" value="clpP"/>
    <property type="match status" value="1"/>
</dbReference>
<dbReference type="NCBIfam" id="NF001368">
    <property type="entry name" value="PRK00277.1"/>
    <property type="match status" value="1"/>
</dbReference>
<dbReference type="NCBIfam" id="NF009205">
    <property type="entry name" value="PRK12553.1"/>
    <property type="match status" value="1"/>
</dbReference>
<dbReference type="PANTHER" id="PTHR10381">
    <property type="entry name" value="ATP-DEPENDENT CLP PROTEASE PROTEOLYTIC SUBUNIT"/>
    <property type="match status" value="1"/>
</dbReference>
<dbReference type="PANTHER" id="PTHR10381:SF70">
    <property type="entry name" value="ATP-DEPENDENT CLP PROTEASE PROTEOLYTIC SUBUNIT"/>
    <property type="match status" value="1"/>
</dbReference>
<dbReference type="Pfam" id="PF00574">
    <property type="entry name" value="CLP_protease"/>
    <property type="match status" value="1"/>
</dbReference>
<dbReference type="PRINTS" id="PR00127">
    <property type="entry name" value="CLPPROTEASEP"/>
</dbReference>
<dbReference type="SUPFAM" id="SSF52096">
    <property type="entry name" value="ClpP/crotonase"/>
    <property type="match status" value="1"/>
</dbReference>
<dbReference type="PROSITE" id="PS00382">
    <property type="entry name" value="CLP_PROTEASE_HIS"/>
    <property type="match status" value="1"/>
</dbReference>
<accession>A9IR54</accession>
<organism>
    <name type="scientific">Bordetella petrii (strain ATCC BAA-461 / DSM 12804 / CCUG 43448)</name>
    <dbReference type="NCBI Taxonomy" id="340100"/>
    <lineage>
        <taxon>Bacteria</taxon>
        <taxon>Pseudomonadati</taxon>
        <taxon>Pseudomonadota</taxon>
        <taxon>Betaproteobacteria</taxon>
        <taxon>Burkholderiales</taxon>
        <taxon>Alcaligenaceae</taxon>
        <taxon>Bordetella</taxon>
    </lineage>
</organism>
<protein>
    <recommendedName>
        <fullName evidence="1">ATP-dependent Clp protease proteolytic subunit</fullName>
        <ecNumber evidence="1">3.4.21.92</ecNumber>
    </recommendedName>
    <alternativeName>
        <fullName evidence="1">Endopeptidase Clp</fullName>
    </alternativeName>
</protein>
<name>CLPP_BORPD</name>